<name>YIDC_MARN8</name>
<feature type="chain" id="PRO_1000070120" description="Membrane protein insertase YidC">
    <location>
        <begin position="1"/>
        <end position="567"/>
    </location>
</feature>
<feature type="transmembrane region" description="Helical" evidence="1">
    <location>
        <begin position="3"/>
        <end position="23"/>
    </location>
</feature>
<feature type="transmembrane region" description="Helical" evidence="1">
    <location>
        <begin position="354"/>
        <end position="374"/>
    </location>
</feature>
<feature type="transmembrane region" description="Helical" evidence="1">
    <location>
        <begin position="378"/>
        <end position="398"/>
    </location>
</feature>
<feature type="transmembrane region" description="Helical" evidence="1">
    <location>
        <begin position="445"/>
        <end position="465"/>
    </location>
</feature>
<feature type="transmembrane region" description="Helical" evidence="1">
    <location>
        <begin position="485"/>
        <end position="505"/>
    </location>
</feature>
<feature type="transmembrane region" description="Helical" evidence="1">
    <location>
        <begin position="522"/>
        <end position="542"/>
    </location>
</feature>
<feature type="region of interest" description="Disordered" evidence="2">
    <location>
        <begin position="32"/>
        <end position="80"/>
    </location>
</feature>
<feature type="compositionally biased region" description="Low complexity" evidence="2">
    <location>
        <begin position="40"/>
        <end position="52"/>
    </location>
</feature>
<feature type="compositionally biased region" description="Polar residues" evidence="2">
    <location>
        <begin position="70"/>
        <end position="80"/>
    </location>
</feature>
<evidence type="ECO:0000255" key="1">
    <source>
        <dbReference type="HAMAP-Rule" id="MF_01810"/>
    </source>
</evidence>
<evidence type="ECO:0000256" key="2">
    <source>
        <dbReference type="SAM" id="MobiDB-lite"/>
    </source>
</evidence>
<organism>
    <name type="scientific">Marinobacter nauticus (strain ATCC 700491 / DSM 11845 / VT8)</name>
    <name type="common">Marinobacter aquaeolei</name>
    <dbReference type="NCBI Taxonomy" id="351348"/>
    <lineage>
        <taxon>Bacteria</taxon>
        <taxon>Pseudomonadati</taxon>
        <taxon>Pseudomonadota</taxon>
        <taxon>Gammaproteobacteria</taxon>
        <taxon>Pseudomonadales</taxon>
        <taxon>Marinobacteraceae</taxon>
        <taxon>Marinobacter</taxon>
    </lineage>
</organism>
<comment type="function">
    <text evidence="1">Required for the insertion and/or proper folding and/or complex formation of integral membrane proteins into the membrane. Involved in integration of membrane proteins that insert both dependently and independently of the Sec translocase complex, as well as at least some lipoproteins. Aids folding of multispanning membrane proteins.</text>
</comment>
<comment type="subunit">
    <text evidence="1">Interacts with the Sec translocase complex via SecD. Specifically interacts with transmembrane segments of nascent integral membrane proteins during membrane integration.</text>
</comment>
<comment type="subcellular location">
    <subcellularLocation>
        <location evidence="1">Cell inner membrane</location>
        <topology evidence="1">Multi-pass membrane protein</topology>
    </subcellularLocation>
</comment>
<comment type="similarity">
    <text evidence="1">Belongs to the OXA1/ALB3/YidC family. Type 1 subfamily.</text>
</comment>
<proteinExistence type="inferred from homology"/>
<accession>A1U7J4</accession>
<sequence length="567" mass="63880">MDIQRIVLFAGLAIVSYLMVLAWNEDYHQPQTEQVAEAQSSSDSSATNSTDDMILPEDNNAGGEEFATPETGSLASTSANSDQDLADRFITVTTDVYELKIDRVGGNVVDSSLLQYDESLDSEQPLKLLTNTSTRTYLLESGLIGRDGPDGSQAGEAPVFQAETGSYQLAEGEDELTINLVYTTDSGVAITKRYHLARNSYQIDVSYLIDNRSESPWQGNFTGKIVRDQAPDPTSQASMGIRAYLGMVISTPEDPYEKYDFEDLSEKRVNQSVTNGWLAFLQHYFLTAWIPERDQKAQFQTTRRGDLHVMGFVYPATTVAPGETAEVGATAYVGPKIIDRLEALAPNLDRTVDFGWLFFISLPLFYILEWFYGLVGNWGVAIILLTVLVKAVFFHLSATSYRSMAKMRAVAPQLTRLKELYGDDRQRMSQEMMALYKREKINPLGGCLPILVQMPVFISLYWVLFESVQLRHAPFMLWIQDLSQMDPYFILPILMGASMFIQMSLNPTPPDPMQAKIMKLMPLIFTVFFLWFPAGLVLYWLVNNILSISQQWYITRKIEAETAGKKY</sequence>
<gene>
    <name evidence="1" type="primary">yidC</name>
    <name type="ordered locus">Maqu_3895</name>
</gene>
<reference key="1">
    <citation type="journal article" date="2011" name="Appl. Environ. Microbiol.">
        <title>Genomic potential of Marinobacter aquaeolei, a biogeochemical 'opportunitroph'.</title>
        <authorList>
            <person name="Singer E."/>
            <person name="Webb E.A."/>
            <person name="Nelson W.C."/>
            <person name="Heidelberg J.F."/>
            <person name="Ivanova N."/>
            <person name="Pati A."/>
            <person name="Edwards K.J."/>
        </authorList>
    </citation>
    <scope>NUCLEOTIDE SEQUENCE [LARGE SCALE GENOMIC DNA]</scope>
    <source>
        <strain>ATCC 700491 / DSM 11845 / VT8</strain>
    </source>
</reference>
<keyword id="KW-0997">Cell inner membrane</keyword>
<keyword id="KW-1003">Cell membrane</keyword>
<keyword id="KW-0143">Chaperone</keyword>
<keyword id="KW-0472">Membrane</keyword>
<keyword id="KW-0653">Protein transport</keyword>
<keyword id="KW-0812">Transmembrane</keyword>
<keyword id="KW-1133">Transmembrane helix</keyword>
<keyword id="KW-0813">Transport</keyword>
<dbReference type="EMBL" id="CP000514">
    <property type="protein sequence ID" value="ABM20963.1"/>
    <property type="molecule type" value="Genomic_DNA"/>
</dbReference>
<dbReference type="RefSeq" id="WP_011787296.1">
    <property type="nucleotide sequence ID" value="NC_008740.1"/>
</dbReference>
<dbReference type="SMR" id="A1U7J4"/>
<dbReference type="STRING" id="351348.Maqu_3895"/>
<dbReference type="KEGG" id="maq:Maqu_3895"/>
<dbReference type="eggNOG" id="COG0706">
    <property type="taxonomic scope" value="Bacteria"/>
</dbReference>
<dbReference type="HOGENOM" id="CLU_016535_3_0_6"/>
<dbReference type="OrthoDB" id="9780552at2"/>
<dbReference type="Proteomes" id="UP000000998">
    <property type="component" value="Chromosome"/>
</dbReference>
<dbReference type="GO" id="GO:0005886">
    <property type="term" value="C:plasma membrane"/>
    <property type="evidence" value="ECO:0007669"/>
    <property type="project" value="UniProtKB-SubCell"/>
</dbReference>
<dbReference type="GO" id="GO:0032977">
    <property type="term" value="F:membrane insertase activity"/>
    <property type="evidence" value="ECO:0007669"/>
    <property type="project" value="InterPro"/>
</dbReference>
<dbReference type="GO" id="GO:0051205">
    <property type="term" value="P:protein insertion into membrane"/>
    <property type="evidence" value="ECO:0007669"/>
    <property type="project" value="TreeGrafter"/>
</dbReference>
<dbReference type="GO" id="GO:0015031">
    <property type="term" value="P:protein transport"/>
    <property type="evidence" value="ECO:0007669"/>
    <property type="project" value="UniProtKB-KW"/>
</dbReference>
<dbReference type="CDD" id="cd20070">
    <property type="entry name" value="5TM_YidC_Alb3"/>
    <property type="match status" value="1"/>
</dbReference>
<dbReference type="CDD" id="cd19961">
    <property type="entry name" value="EcYidC-like_peri"/>
    <property type="match status" value="1"/>
</dbReference>
<dbReference type="Gene3D" id="2.70.98.90">
    <property type="match status" value="1"/>
</dbReference>
<dbReference type="HAMAP" id="MF_01810">
    <property type="entry name" value="YidC_type1"/>
    <property type="match status" value="1"/>
</dbReference>
<dbReference type="InterPro" id="IPR019998">
    <property type="entry name" value="Membr_insert_YidC"/>
</dbReference>
<dbReference type="InterPro" id="IPR028053">
    <property type="entry name" value="Membr_insert_YidC_N"/>
</dbReference>
<dbReference type="InterPro" id="IPR001708">
    <property type="entry name" value="YidC/ALB3/OXA1/COX18"/>
</dbReference>
<dbReference type="InterPro" id="IPR028055">
    <property type="entry name" value="YidC/Oxa/ALB_C"/>
</dbReference>
<dbReference type="InterPro" id="IPR047196">
    <property type="entry name" value="YidC_ALB_C"/>
</dbReference>
<dbReference type="InterPro" id="IPR038221">
    <property type="entry name" value="YidC_periplasmic_sf"/>
</dbReference>
<dbReference type="NCBIfam" id="NF002352">
    <property type="entry name" value="PRK01318.1-3"/>
    <property type="match status" value="1"/>
</dbReference>
<dbReference type="NCBIfam" id="TIGR03593">
    <property type="entry name" value="yidC_nterm"/>
    <property type="match status" value="1"/>
</dbReference>
<dbReference type="NCBIfam" id="TIGR03592">
    <property type="entry name" value="yidC_oxa1_cterm"/>
    <property type="match status" value="1"/>
</dbReference>
<dbReference type="PANTHER" id="PTHR12428:SF65">
    <property type="entry name" value="CYTOCHROME C OXIDASE ASSEMBLY PROTEIN COX18, MITOCHONDRIAL"/>
    <property type="match status" value="1"/>
</dbReference>
<dbReference type="PANTHER" id="PTHR12428">
    <property type="entry name" value="OXA1"/>
    <property type="match status" value="1"/>
</dbReference>
<dbReference type="Pfam" id="PF02096">
    <property type="entry name" value="60KD_IMP"/>
    <property type="match status" value="1"/>
</dbReference>
<dbReference type="Pfam" id="PF14849">
    <property type="entry name" value="YidC_periplas"/>
    <property type="match status" value="1"/>
</dbReference>
<dbReference type="PRINTS" id="PR00701">
    <property type="entry name" value="60KDINNERMP"/>
</dbReference>
<dbReference type="PRINTS" id="PR01900">
    <property type="entry name" value="YIDCPROTEIN"/>
</dbReference>
<protein>
    <recommendedName>
        <fullName evidence="1">Membrane protein insertase YidC</fullName>
    </recommendedName>
    <alternativeName>
        <fullName evidence="1">Foldase YidC</fullName>
    </alternativeName>
    <alternativeName>
        <fullName evidence="1">Membrane integrase YidC</fullName>
    </alternativeName>
    <alternativeName>
        <fullName evidence="1">Membrane protein YidC</fullName>
    </alternativeName>
</protein>